<keyword id="KW-0325">Glycoprotein</keyword>
<keyword id="KW-0328">Glycosyltransferase</keyword>
<keyword id="KW-0333">Golgi apparatus</keyword>
<keyword id="KW-0732">Signal</keyword>
<keyword id="KW-0808">Transferase</keyword>
<reference key="1">
    <citation type="journal article" date="2007" name="Proc. Natl. Acad. Sci. U.S.A.">
        <title>Genome sequencing and comparative analysis of Saccharomyces cerevisiae strain YJM789.</title>
        <authorList>
            <person name="Wei W."/>
            <person name="McCusker J.H."/>
            <person name="Hyman R.W."/>
            <person name="Jones T."/>
            <person name="Ning Y."/>
            <person name="Cao Z."/>
            <person name="Gu Z."/>
            <person name="Bruno D."/>
            <person name="Miranda M."/>
            <person name="Nguyen M."/>
            <person name="Wilhelmy J."/>
            <person name="Komp C."/>
            <person name="Tamse R."/>
            <person name="Wang X."/>
            <person name="Jia P."/>
            <person name="Luedi P."/>
            <person name="Oefner P.J."/>
            <person name="David L."/>
            <person name="Dietrich F.S."/>
            <person name="Li Y."/>
            <person name="Davis R.W."/>
            <person name="Steinmetz L.M."/>
        </authorList>
    </citation>
    <scope>NUCLEOTIDE SEQUENCE [LARGE SCALE GENOMIC DNA]</scope>
    <source>
        <strain>YJM789</strain>
    </source>
</reference>
<name>MNN5_YEAS7</name>
<organism>
    <name type="scientific">Saccharomyces cerevisiae (strain YJM789)</name>
    <name type="common">Baker's yeast</name>
    <dbReference type="NCBI Taxonomy" id="307796"/>
    <lineage>
        <taxon>Eukaryota</taxon>
        <taxon>Fungi</taxon>
        <taxon>Dikarya</taxon>
        <taxon>Ascomycota</taxon>
        <taxon>Saccharomycotina</taxon>
        <taxon>Saccharomycetes</taxon>
        <taxon>Saccharomycetales</taxon>
        <taxon>Saccharomycetaceae</taxon>
        <taxon>Saccharomyces</taxon>
    </lineage>
</organism>
<sequence length="586" mass="67252">MLIRLKKRKILQVIVSAVVLILFFCSVHNDVSSSWLYGKKLRLPVLTRSNLKNNFYTTLVQAIVENKPTDSSPDLSKLHGAEGCSFANNVAAHDSGHDSDLSYESLSKCYNLNKTVQESLREVHSKFTDTLSGKLNFSIPQREALFSGSEGIVTIGGGKYSVLAYTMIKKLRDTGTTLPIEVIIPPQDEGEDDFCKNWLPKFNGKCIYFSDIVPSKPLSDLKLTHFQLKVFGLIISSFKRIIFLDADNYAVKNLDLAFNTTSFNDTGLILWPDFWRRVTPPAFYNIIGSSIDIGKRVRFVSDDISPVSRYDPFVSNSNDYTPKERQEHFLKHVPLHDLDGTMPDLSSESGQMVIDKIRHFNTLLLALYYNVYGPTWYYKMISQGTAGEGDKDTFVAAAHALNMPYYQVRTKFEFDGFFYQKDDYKGLALLQHDFEQDYKQYQKAQQEVKANIEEFSKLDPDYTLDNGFLKTLMVNDDGSDLDIMFIHASFYKADPWTLYHENRFIGPNGEQVRGFRKPHRYGMDFELFLFNDMSKSFCTTPKSQVIKFKYFTDKVNTPEWDAMCEYLTNHVNYLESTHKEAMGEKN</sequence>
<dbReference type="EC" id="2.4.1.-"/>
<dbReference type="EMBL" id="AAFW02000044">
    <property type="protein sequence ID" value="EDN63201.1"/>
    <property type="molecule type" value="Genomic_DNA"/>
</dbReference>
<dbReference type="GlyCosmos" id="A6ZQE9">
    <property type="glycosylation" value="4 sites, No reported glycans"/>
</dbReference>
<dbReference type="HOGENOM" id="CLU_013298_1_1_1"/>
<dbReference type="UniPathway" id="UPA00378"/>
<dbReference type="Proteomes" id="UP000007060">
    <property type="component" value="Unassembled WGS sequence"/>
</dbReference>
<dbReference type="GO" id="GO:0005794">
    <property type="term" value="C:Golgi apparatus"/>
    <property type="evidence" value="ECO:0007669"/>
    <property type="project" value="UniProtKB-SubCell"/>
</dbReference>
<dbReference type="GO" id="GO:0000026">
    <property type="term" value="F:alpha-1,2-mannosyltransferase activity"/>
    <property type="evidence" value="ECO:0007669"/>
    <property type="project" value="TreeGrafter"/>
</dbReference>
<dbReference type="GO" id="GO:0046354">
    <property type="term" value="P:mannan biosynthetic process"/>
    <property type="evidence" value="ECO:0007669"/>
    <property type="project" value="TreeGrafter"/>
</dbReference>
<dbReference type="GO" id="GO:0035268">
    <property type="term" value="P:protein mannosylation"/>
    <property type="evidence" value="ECO:0007669"/>
    <property type="project" value="TreeGrafter"/>
</dbReference>
<dbReference type="FunFam" id="3.90.550.10:FF:000177">
    <property type="entry name" value="MNN5p Alpha-1,2-mannosyltransferase"/>
    <property type="match status" value="1"/>
</dbReference>
<dbReference type="Gene3D" id="3.90.550.10">
    <property type="entry name" value="Spore Coat Polysaccharide Biosynthesis Protein SpsA, Chain A"/>
    <property type="match status" value="1"/>
</dbReference>
<dbReference type="InterPro" id="IPR022751">
    <property type="entry name" value="Alpha_mannosyltransferase"/>
</dbReference>
<dbReference type="InterPro" id="IPR029044">
    <property type="entry name" value="Nucleotide-diphossugar_trans"/>
</dbReference>
<dbReference type="PANTHER" id="PTHR31646">
    <property type="entry name" value="ALPHA-1,2-MANNOSYLTRANSFERASE MNN2"/>
    <property type="match status" value="1"/>
</dbReference>
<dbReference type="PANTHER" id="PTHR31646:SF6">
    <property type="entry name" value="ALPHA-1,2-MANNOSYLTRANSFERASE MNN5"/>
    <property type="match status" value="1"/>
</dbReference>
<dbReference type="Pfam" id="PF11051">
    <property type="entry name" value="Mannosyl_trans3"/>
    <property type="match status" value="1"/>
</dbReference>
<dbReference type="SUPFAM" id="SSF53448">
    <property type="entry name" value="Nucleotide-diphospho-sugar transferases"/>
    <property type="match status" value="1"/>
</dbReference>
<proteinExistence type="inferred from homology"/>
<protein>
    <recommendedName>
        <fullName>Alpha-1,2-mannosyltransferase MNN5</fullName>
        <ecNumber>2.4.1.-</ecNumber>
    </recommendedName>
</protein>
<accession>A6ZQE9</accession>
<comment type="function">
    <text evidence="1">Responsible for addition of first and second mannose residues to the outer chain of core N-linked polysaccharides and to O-linked mannotriose. Implicated in late Golgi modifications (By similarity).</text>
</comment>
<comment type="pathway">
    <text>Protein modification; protein glycosylation.</text>
</comment>
<comment type="subcellular location">
    <subcellularLocation>
        <location evidence="1">Golgi apparatus</location>
        <location evidence="1">cis-Golgi network</location>
    </subcellularLocation>
</comment>
<comment type="PTM">
    <text evidence="1">Glycosylated.</text>
</comment>
<comment type="similarity">
    <text evidence="3">Belongs to the MNN1/MNT family.</text>
</comment>
<gene>
    <name type="primary">MNN5</name>
    <name type="ORF">SCY_3110</name>
</gene>
<evidence type="ECO:0000250" key="1"/>
<evidence type="ECO:0000255" key="2"/>
<evidence type="ECO:0000305" key="3"/>
<feature type="signal peptide" evidence="2">
    <location>
        <begin position="1"/>
        <end position="29"/>
    </location>
</feature>
<feature type="chain" id="PRO_0000320340" description="Alpha-1,2-mannosyltransferase MNN5">
    <location>
        <begin position="30"/>
        <end position="586"/>
    </location>
</feature>
<feature type="glycosylation site" description="N-linked (GlcNAc...) asparagine" evidence="2">
    <location>
        <position position="113"/>
    </location>
</feature>
<feature type="glycosylation site" description="N-linked (GlcNAc...) asparagine" evidence="2">
    <location>
        <position position="136"/>
    </location>
</feature>
<feature type="glycosylation site" description="N-linked (GlcNAc...) asparagine" evidence="2">
    <location>
        <position position="259"/>
    </location>
</feature>
<feature type="glycosylation site" description="N-linked (GlcNAc...) asparagine" evidence="2">
    <location>
        <position position="264"/>
    </location>
</feature>